<comment type="function">
    <text>Through the carboxylation of phosphoenolpyruvate (PEP) it forms oxaloacetate, a four-carbon dicarboxylic acid source for the tricarboxylic acid cycle.</text>
</comment>
<comment type="catalytic activity">
    <reaction>
        <text>oxaloacetate + phosphate = phosphoenolpyruvate + hydrogencarbonate</text>
        <dbReference type="Rhea" id="RHEA:28370"/>
        <dbReference type="ChEBI" id="CHEBI:16452"/>
        <dbReference type="ChEBI" id="CHEBI:17544"/>
        <dbReference type="ChEBI" id="CHEBI:43474"/>
        <dbReference type="ChEBI" id="CHEBI:58702"/>
        <dbReference type="EC" id="4.1.1.31"/>
    </reaction>
</comment>
<comment type="cofactor">
    <cofactor evidence="1">
        <name>Mg(2+)</name>
        <dbReference type="ChEBI" id="CHEBI:18420"/>
    </cofactor>
</comment>
<comment type="activity regulation">
    <text>By light-reversible phosphorylation.</text>
</comment>
<comment type="subunit">
    <text evidence="1">Homotetramer.</text>
</comment>
<comment type="subcellular location">
    <subcellularLocation>
        <location>Cytoplasm</location>
    </subcellularLocation>
</comment>
<comment type="similarity">
    <text evidence="2">Belongs to the PEPCase type 1 family.</text>
</comment>
<feature type="chain" id="PRO_0000166675" description="Phosphoenolpyruvate carboxylase, housekeeping isozyme">
    <location>
        <begin position="1"/>
        <end position="966"/>
    </location>
</feature>
<feature type="active site" evidence="1">
    <location>
        <position position="172"/>
    </location>
</feature>
<feature type="active site" evidence="1">
    <location>
        <position position="601"/>
    </location>
</feature>
<feature type="modified residue" description="Phosphoserine" evidence="1">
    <location>
        <position position="11"/>
    </location>
</feature>
<protein>
    <recommendedName>
        <fullName>Phosphoenolpyruvate carboxylase, housekeeping isozyme</fullName>
        <shortName>PEPC</shortName>
        <shortName>PEPCase</shortName>
        <ecNumber>4.1.1.31</ecNumber>
    </recommendedName>
</protein>
<dbReference type="EC" id="4.1.1.31"/>
<dbReference type="EMBL" id="M86661">
    <property type="protein sequence ID" value="AAC33164.1"/>
    <property type="molecule type" value="Genomic_DNA"/>
</dbReference>
<dbReference type="SMR" id="P29193"/>
<dbReference type="GO" id="GO:0048046">
    <property type="term" value="C:apoplast"/>
    <property type="evidence" value="ECO:0007669"/>
    <property type="project" value="TreeGrafter"/>
</dbReference>
<dbReference type="GO" id="GO:0009507">
    <property type="term" value="C:chloroplast"/>
    <property type="evidence" value="ECO:0007669"/>
    <property type="project" value="TreeGrafter"/>
</dbReference>
<dbReference type="GO" id="GO:0005829">
    <property type="term" value="C:cytosol"/>
    <property type="evidence" value="ECO:0007669"/>
    <property type="project" value="TreeGrafter"/>
</dbReference>
<dbReference type="GO" id="GO:0008964">
    <property type="term" value="F:phosphoenolpyruvate carboxylase activity"/>
    <property type="evidence" value="ECO:0007669"/>
    <property type="project" value="UniProtKB-EC"/>
</dbReference>
<dbReference type="GO" id="GO:0015977">
    <property type="term" value="P:carbon fixation"/>
    <property type="evidence" value="ECO:0007669"/>
    <property type="project" value="UniProtKB-KW"/>
</dbReference>
<dbReference type="GO" id="GO:0048366">
    <property type="term" value="P:leaf development"/>
    <property type="evidence" value="ECO:0007669"/>
    <property type="project" value="TreeGrafter"/>
</dbReference>
<dbReference type="GO" id="GO:0015979">
    <property type="term" value="P:photosynthesis"/>
    <property type="evidence" value="ECO:0007669"/>
    <property type="project" value="UniProtKB-KW"/>
</dbReference>
<dbReference type="GO" id="GO:0006099">
    <property type="term" value="P:tricarboxylic acid cycle"/>
    <property type="evidence" value="ECO:0007669"/>
    <property type="project" value="InterPro"/>
</dbReference>
<dbReference type="FunFam" id="1.20.1440.90:FF:000001">
    <property type="entry name" value="Phosphoenolpyruvate carboxylase 1"/>
    <property type="match status" value="1"/>
</dbReference>
<dbReference type="Gene3D" id="1.20.1440.90">
    <property type="entry name" value="Phosphoenolpyruvate/pyruvate domain"/>
    <property type="match status" value="1"/>
</dbReference>
<dbReference type="HAMAP" id="MF_00595">
    <property type="entry name" value="PEPcase_type1"/>
    <property type="match status" value="1"/>
</dbReference>
<dbReference type="InterPro" id="IPR021135">
    <property type="entry name" value="PEP_COase"/>
</dbReference>
<dbReference type="InterPro" id="IPR022805">
    <property type="entry name" value="PEP_COase_bac/pln-type"/>
</dbReference>
<dbReference type="InterPro" id="IPR018129">
    <property type="entry name" value="PEP_COase_Lys_AS"/>
</dbReference>
<dbReference type="InterPro" id="IPR033129">
    <property type="entry name" value="PEPCASE_His_AS"/>
</dbReference>
<dbReference type="InterPro" id="IPR015813">
    <property type="entry name" value="Pyrv/PenolPyrv_kinase-like_dom"/>
</dbReference>
<dbReference type="NCBIfam" id="NF000584">
    <property type="entry name" value="PRK00009.1"/>
    <property type="match status" value="1"/>
</dbReference>
<dbReference type="PANTHER" id="PTHR30523">
    <property type="entry name" value="PHOSPHOENOLPYRUVATE CARBOXYLASE"/>
    <property type="match status" value="1"/>
</dbReference>
<dbReference type="PANTHER" id="PTHR30523:SF33">
    <property type="entry name" value="PHOSPHOENOLPYRUVATE CARBOXYLASE 3"/>
    <property type="match status" value="1"/>
</dbReference>
<dbReference type="Pfam" id="PF00311">
    <property type="entry name" value="PEPcase"/>
    <property type="match status" value="1"/>
</dbReference>
<dbReference type="PRINTS" id="PR00150">
    <property type="entry name" value="PEPCARBXLASE"/>
</dbReference>
<dbReference type="SUPFAM" id="SSF51621">
    <property type="entry name" value="Phosphoenolpyruvate/pyruvate domain"/>
    <property type="match status" value="1"/>
</dbReference>
<dbReference type="PROSITE" id="PS00781">
    <property type="entry name" value="PEPCASE_1"/>
    <property type="match status" value="1"/>
</dbReference>
<dbReference type="PROSITE" id="PS00393">
    <property type="entry name" value="PEPCASE_2"/>
    <property type="match status" value="1"/>
</dbReference>
<accession>P29193</accession>
<evidence type="ECO:0000250" key="1"/>
<evidence type="ECO:0000305" key="2"/>
<name>CAPP1_SACHY</name>
<organism>
    <name type="scientific">Saccharum hybrid</name>
    <name type="common">Sugarcane</name>
    <dbReference type="NCBI Taxonomy" id="15819"/>
    <lineage>
        <taxon>Eukaryota</taxon>
        <taxon>Viridiplantae</taxon>
        <taxon>Streptophyta</taxon>
        <taxon>Embryophyta</taxon>
        <taxon>Tracheophyta</taxon>
        <taxon>Spermatophyta</taxon>
        <taxon>Magnoliopsida</taxon>
        <taxon>Liliopsida</taxon>
        <taxon>Poales</taxon>
        <taxon>Poaceae</taxon>
        <taxon>PACMAD clade</taxon>
        <taxon>Panicoideae</taxon>
        <taxon>Andropogonodae</taxon>
        <taxon>Andropogoneae</taxon>
        <taxon>Saccharinae</taxon>
        <taxon>Saccharum</taxon>
    </lineage>
</organism>
<reference key="1">
    <citation type="journal article" date="1992" name="Plant Mol. Biol.">
        <title>Structure and expression of a sugarcane gene encoding a housekeeping phosphoenolpyruvate carboxylase.</title>
        <authorList>
            <person name="Albert H.A."/>
            <person name="Martin T."/>
            <person name="Sun S.S."/>
        </authorList>
    </citation>
    <scope>NUCLEOTIDE SEQUENCE [GENOMIC DNA]</scope>
</reference>
<proteinExistence type="inferred from homology"/>
<sequence length="966" mass="110219">MARNAVDKATSIDAQLRLLAPQKLSDDDKLVEYDALLLDRFLDILQDLHGEDIRETVQECYELAAEYENKLDPKMLDEIGNVLTSLDPGDSIVITKSFSHMLILANLAEEVQIAYRRRIKLKKGDFVDENSATTESDIEETLKRLMHQLKKSPLEVFDALKNQTVDLVLTAHPTQSVRRSLLQKHGRIRNCLTQLYAKDITPDEKQELDEALQREIQAAFRTDEIRRAPPTPQDEMRAGMSYFHETIWKGVPKFLRRVDTALKNIGINERLPYNAPIIQFSSWMGGDRDGNPRVTPEITRDVCLLARMMAANLYNAQIEDLMFELSMWRCSDELRVKVDELHRSSKKDTTKHYIEFWKQVPPSEPYRVILSDVRDKLYNTRERARHLLASGFSEIPEEATFTDVEQFLEPLELCYRSLCACGDRSVADGSLLDFLRQVSTFGLSLVRLDIRQESDRHTDVMDAITEYLGIGSYRKWTEEKRQEWLLSELNGKRPLFGPDLPKSDEIADVLDTFHVLAELPSDSFGAYVISMATAPSDVLAVELLQRECHVKKPLRVVPLFEKLADLEAAPAALARLFSVEWYRNRINGKQEVMIGYSDSGKDAGRFSAAWQLYKAQEELINVAKLYGVKLTMFHGRGGTVGRGGGPTHLAILSQPPETIHGSLRVTVQGEVIEQSFGEEHLCFRTLQRFTAATLEHGMHPPISPKPEWRALMDEMAIVATKEYRSIVFEEPRFVEYFRLATPEMEYGRMNIGSRPSKRKPSAGIESLRAIPWIFAWTQTRFHLPVWLGFGAAFKHVLDKDIRNLQTLQEMYNQWPFFRVTIDLVEMVFAKGDPGIAALYDKLLVSEDLWSFGKRLRANYEETKQLLLQVAGHKDLLEGDPYLKQRLRIRDSYITALNVCQAYMLKRIRDPGFQVNPGPHLSKDIMDMGKPASELVKLNTTSEYAPGLEDTLILTMKGIAAGMQNTG</sequence>
<keyword id="KW-0021">Allosteric enzyme</keyword>
<keyword id="KW-0120">Carbon dioxide fixation</keyword>
<keyword id="KW-0963">Cytoplasm</keyword>
<keyword id="KW-0456">Lyase</keyword>
<keyword id="KW-0460">Magnesium</keyword>
<keyword id="KW-0597">Phosphoprotein</keyword>
<keyword id="KW-0602">Photosynthesis</keyword>